<reference key="1">
    <citation type="journal article" date="1998" name="Phytochemistry">
        <title>A low temperature induced apoplastic protein isolated from Arachis hypogaea.</title>
        <authorList>
            <person name="Dave R.S."/>
            <person name="Mitra R.K."/>
        </authorList>
    </citation>
    <scope>PROTEIN SEQUENCE</scope>
    <scope>CHARACTERIZATION</scope>
    <source>
        <strain>cv. TAG-24</strain>
        <tissue>Leaf</tissue>
    </source>
</reference>
<dbReference type="GO" id="GO:0048046">
    <property type="term" value="C:apoplast"/>
    <property type="evidence" value="ECO:0007669"/>
    <property type="project" value="UniProtKB-SubCell"/>
</dbReference>
<accession>P80926</accession>
<name>CS33_ARAHY</name>
<feature type="chain" id="PRO_0000096237" description="33.0 kDa cold shock protein">
    <location>
        <begin position="1"/>
        <end position="24" status="greater than"/>
    </location>
</feature>
<feature type="non-terminal residue">
    <location>
        <position position="24"/>
    </location>
</feature>
<sequence>AQITLTNKASYTVTPPAQANAADA</sequence>
<keyword id="KW-0052">Apoplast</keyword>
<keyword id="KW-0903">Direct protein sequencing</keyword>
<keyword id="KW-1015">Disulfide bond</keyword>
<keyword id="KW-0325">Glycoprotein</keyword>
<keyword id="KW-0964">Secreted</keyword>
<keyword id="KW-0346">Stress response</keyword>
<organism>
    <name type="scientific">Arachis hypogaea</name>
    <name type="common">Peanut</name>
    <dbReference type="NCBI Taxonomy" id="3818"/>
    <lineage>
        <taxon>Eukaryota</taxon>
        <taxon>Viridiplantae</taxon>
        <taxon>Streptophyta</taxon>
        <taxon>Embryophyta</taxon>
        <taxon>Tracheophyta</taxon>
        <taxon>Spermatophyta</taxon>
        <taxon>Magnoliopsida</taxon>
        <taxon>eudicotyledons</taxon>
        <taxon>Gunneridae</taxon>
        <taxon>Pentapetalae</taxon>
        <taxon>rosids</taxon>
        <taxon>fabids</taxon>
        <taxon>Fabales</taxon>
        <taxon>Fabaceae</taxon>
        <taxon>Papilionoideae</taxon>
        <taxon>50 kb inversion clade</taxon>
        <taxon>dalbergioids sensu lato</taxon>
        <taxon>Dalbergieae</taxon>
        <taxon>Pterocarpus clade</taxon>
        <taxon>Arachis</taxon>
    </lineage>
</organism>
<protein>
    <recommendedName>
        <fullName>33.0 kDa cold shock protein</fullName>
    </recommendedName>
    <alternativeName>
        <fullName>AHCSP33</fullName>
    </alternativeName>
</protein>
<proteinExistence type="evidence at protein level"/>
<comment type="subunit">
    <text>Homooligomer; disulfide-linked.</text>
</comment>
<comment type="subcellular location">
    <subcellularLocation>
        <location>Secreted</location>
        <location>Extracellular space</location>
        <location>Apoplast</location>
    </subcellularLocation>
</comment>
<comment type="induction">
    <text>By cold shock.</text>
</comment>
<comment type="PTM">
    <text>Glycosylated.</text>
</comment>
<comment type="similarity">
    <text evidence="1">Belongs to the thaumatin family.</text>
</comment>
<evidence type="ECO:0000305" key="1"/>